<dbReference type="EMBL" id="BC007516">
    <property type="protein sequence ID" value="AAH07516.1"/>
    <property type="molecule type" value="mRNA"/>
</dbReference>
<dbReference type="CCDS" id="CCDS12264.1"/>
<dbReference type="RefSeq" id="NP_001350602.2">
    <property type="nucleotide sequence ID" value="NM_001363673.3"/>
</dbReference>
<dbReference type="RefSeq" id="NP_001350603.2">
    <property type="nucleotide sequence ID" value="NM_001363674.4"/>
</dbReference>
<dbReference type="RefSeq" id="NP_001350604.2">
    <property type="nucleotide sequence ID" value="NM_001363675.4"/>
</dbReference>
<dbReference type="RefSeq" id="NP_115753.1">
    <property type="nucleotide sequence ID" value="NM_032377.4"/>
</dbReference>
<dbReference type="RefSeq" id="XP_016882847.1">
    <property type="nucleotide sequence ID" value="XM_017027358.1"/>
</dbReference>
<dbReference type="RefSeq" id="XP_016882848.1">
    <property type="nucleotide sequence ID" value="XM_017027359.1"/>
</dbReference>
<dbReference type="PDB" id="8B3D">
    <property type="method" value="EM"/>
    <property type="resolution" value="2.60 A"/>
    <property type="chains" value="M=1-83"/>
</dbReference>
<dbReference type="PDB" id="9ER2">
    <property type="method" value="EM"/>
    <property type="resolution" value="3.30 A"/>
    <property type="chains" value="O=20-83"/>
</dbReference>
<dbReference type="PDB" id="9FD2">
    <property type="method" value="EM"/>
    <property type="resolution" value="3.40 A"/>
    <property type="chains" value="f=1-83"/>
</dbReference>
<dbReference type="PDBsum" id="8B3D"/>
<dbReference type="PDBsum" id="9ER2"/>
<dbReference type="PDBsum" id="9FD2"/>
<dbReference type="EMDB" id="EMD-19909"/>
<dbReference type="EMDB" id="EMD-50292"/>
<dbReference type="EMDB" id="EMD-50294"/>
<dbReference type="EMDB" id="EMD-50325"/>
<dbReference type="SMR" id="P60002"/>
<dbReference type="BioGRID" id="124061">
    <property type="interactions" value="69"/>
</dbReference>
<dbReference type="FunCoup" id="P60002">
    <property type="interactions" value="1586"/>
</dbReference>
<dbReference type="IntAct" id="P60002">
    <property type="interactions" value="7"/>
</dbReference>
<dbReference type="MINT" id="P60002"/>
<dbReference type="STRING" id="9606.ENSP00000465765"/>
<dbReference type="iPTMnet" id="P60002"/>
<dbReference type="PhosphoSitePlus" id="P60002"/>
<dbReference type="BioMuta" id="ELOF1"/>
<dbReference type="DMDM" id="38372864"/>
<dbReference type="jPOST" id="P60002"/>
<dbReference type="MassIVE" id="P60002"/>
<dbReference type="PaxDb" id="9606-ENSP00000252445"/>
<dbReference type="PeptideAtlas" id="P60002"/>
<dbReference type="ProteomicsDB" id="57177"/>
<dbReference type="Pumba" id="P60002"/>
<dbReference type="Antibodypedia" id="13205">
    <property type="antibodies" value="85 antibodies from 24 providers"/>
</dbReference>
<dbReference type="DNASU" id="84337"/>
<dbReference type="Ensembl" id="ENST00000252445.8">
    <property type="protein sequence ID" value="ENSP00000252445.3"/>
    <property type="gene ID" value="ENSG00000130165.11"/>
</dbReference>
<dbReference type="Ensembl" id="ENST00000586120.5">
    <property type="protein sequence ID" value="ENSP00000467914.1"/>
    <property type="gene ID" value="ENSG00000130165.11"/>
</dbReference>
<dbReference type="Ensembl" id="ENST00000587806.5">
    <property type="protein sequence ID" value="ENSP00000465765.2"/>
    <property type="gene ID" value="ENSG00000130165.11"/>
</dbReference>
<dbReference type="Ensembl" id="ENST00000590700.5">
    <property type="protein sequence ID" value="ENSP00000467264.1"/>
    <property type="gene ID" value="ENSG00000130165.11"/>
</dbReference>
<dbReference type="Ensembl" id="ENST00000591674.5">
    <property type="protein sequence ID" value="ENSP00000467330.2"/>
    <property type="gene ID" value="ENSG00000130165.11"/>
</dbReference>
<dbReference type="GeneID" id="84337"/>
<dbReference type="KEGG" id="hsa:84337"/>
<dbReference type="MANE-Select" id="ENST00000252445.8">
    <property type="protein sequence ID" value="ENSP00000252445.3"/>
    <property type="RefSeq nucleotide sequence ID" value="NM_032377.4"/>
    <property type="RefSeq protein sequence ID" value="NP_115753.1"/>
</dbReference>
<dbReference type="UCSC" id="uc002mse.1">
    <property type="organism name" value="human"/>
</dbReference>
<dbReference type="AGR" id="HGNC:28691"/>
<dbReference type="CTD" id="84337"/>
<dbReference type="DisGeNET" id="84337"/>
<dbReference type="GeneCards" id="ELOF1"/>
<dbReference type="HGNC" id="HGNC:28691">
    <property type="gene designation" value="ELOF1"/>
</dbReference>
<dbReference type="HPA" id="ENSG00000130165">
    <property type="expression patterns" value="Low tissue specificity"/>
</dbReference>
<dbReference type="MIM" id="619818">
    <property type="type" value="gene"/>
</dbReference>
<dbReference type="neXtProt" id="NX_P60002"/>
<dbReference type="OpenTargets" id="ENSG00000130165"/>
<dbReference type="PharmGKB" id="PA142671911"/>
<dbReference type="VEuPathDB" id="HostDB:ENSG00000130165"/>
<dbReference type="eggNOG" id="KOG3214">
    <property type="taxonomic scope" value="Eukaryota"/>
</dbReference>
<dbReference type="GeneTree" id="ENSGT00390000000053"/>
<dbReference type="HOGENOM" id="CLU_105983_2_0_1"/>
<dbReference type="InParanoid" id="P60002"/>
<dbReference type="OMA" id="CLDANKK"/>
<dbReference type="OrthoDB" id="445983at2759"/>
<dbReference type="PAN-GO" id="P60002">
    <property type="GO annotations" value="3 GO annotations based on evolutionary models"/>
</dbReference>
<dbReference type="PhylomeDB" id="P60002"/>
<dbReference type="TreeFam" id="TF313731"/>
<dbReference type="PathwayCommons" id="P60002"/>
<dbReference type="SignaLink" id="P60002"/>
<dbReference type="SIGNOR" id="P60002"/>
<dbReference type="BioGRID-ORCS" id="84337">
    <property type="hits" value="277 hits in 1176 CRISPR screens"/>
</dbReference>
<dbReference type="ChiTaRS" id="ELOF1">
    <property type="organism name" value="human"/>
</dbReference>
<dbReference type="GenomeRNAi" id="84337"/>
<dbReference type="Pharos" id="P60002">
    <property type="development level" value="Tbio"/>
</dbReference>
<dbReference type="PRO" id="PR:P60002"/>
<dbReference type="Proteomes" id="UP000005640">
    <property type="component" value="Chromosome 19"/>
</dbReference>
<dbReference type="RNAct" id="P60002">
    <property type="molecule type" value="protein"/>
</dbReference>
<dbReference type="Bgee" id="ENSG00000130165">
    <property type="expression patterns" value="Expressed in left testis and 181 other cell types or tissues"/>
</dbReference>
<dbReference type="ExpressionAtlas" id="P60002">
    <property type="expression patterns" value="baseline and differential"/>
</dbReference>
<dbReference type="GO" id="GO:0005694">
    <property type="term" value="C:chromosome"/>
    <property type="evidence" value="ECO:0000314"/>
    <property type="project" value="UniProtKB"/>
</dbReference>
<dbReference type="GO" id="GO:0005634">
    <property type="term" value="C:nucleus"/>
    <property type="evidence" value="ECO:0000314"/>
    <property type="project" value="UniProtKB"/>
</dbReference>
<dbReference type="GO" id="GO:0008023">
    <property type="term" value="C:transcription elongation factor complex"/>
    <property type="evidence" value="ECO:0000318"/>
    <property type="project" value="GO_Central"/>
</dbReference>
<dbReference type="GO" id="GO:0030674">
    <property type="term" value="F:protein-macromolecule adaptor activity"/>
    <property type="evidence" value="ECO:0000314"/>
    <property type="project" value="UniProtKB"/>
</dbReference>
<dbReference type="GO" id="GO:0000993">
    <property type="term" value="F:RNA polymerase II complex binding"/>
    <property type="evidence" value="ECO:0000314"/>
    <property type="project" value="UniProtKB"/>
</dbReference>
<dbReference type="GO" id="GO:0008270">
    <property type="term" value="F:zinc ion binding"/>
    <property type="evidence" value="ECO:0007669"/>
    <property type="project" value="UniProtKB-KW"/>
</dbReference>
<dbReference type="GO" id="GO:0006368">
    <property type="term" value="P:transcription elongation by RNA polymerase II"/>
    <property type="evidence" value="ECO:0000318"/>
    <property type="project" value="GO_Central"/>
</dbReference>
<dbReference type="GO" id="GO:0006283">
    <property type="term" value="P:transcription-coupled nucleotide-excision repair"/>
    <property type="evidence" value="ECO:0000314"/>
    <property type="project" value="UniProtKB"/>
</dbReference>
<dbReference type="FunFam" id="2.20.25.190:FF:000002">
    <property type="entry name" value="Transcription elongation factor 1 homolog"/>
    <property type="match status" value="1"/>
</dbReference>
<dbReference type="Gene3D" id="2.20.25.190">
    <property type="match status" value="1"/>
</dbReference>
<dbReference type="InterPro" id="IPR007808">
    <property type="entry name" value="Elf1"/>
</dbReference>
<dbReference type="InterPro" id="IPR038567">
    <property type="entry name" value="T_Elf1_sf"/>
</dbReference>
<dbReference type="PANTHER" id="PTHR20934">
    <property type="entry name" value="TRANSCRIPTION ELONGATION FACTOR 1 HOMOLOG"/>
    <property type="match status" value="1"/>
</dbReference>
<dbReference type="PANTHER" id="PTHR20934:SF0">
    <property type="entry name" value="TRANSCRIPTION ELONGATION FACTOR 1 HOMOLOG"/>
    <property type="match status" value="1"/>
</dbReference>
<dbReference type="Pfam" id="PF05129">
    <property type="entry name" value="Zn_ribbon_Elf1"/>
    <property type="match status" value="1"/>
</dbReference>
<dbReference type="SUPFAM" id="SSF57783">
    <property type="entry name" value="Zinc beta-ribbon"/>
    <property type="match status" value="1"/>
</dbReference>
<protein>
    <recommendedName>
        <fullName evidence="5">Transcription elongation factor 1 homolog</fullName>
    </recommendedName>
</protein>
<gene>
    <name evidence="4 6" type="primary">ELOF1</name>
</gene>
<organism>
    <name type="scientific">Homo sapiens</name>
    <name type="common">Human</name>
    <dbReference type="NCBI Taxonomy" id="9606"/>
    <lineage>
        <taxon>Eukaryota</taxon>
        <taxon>Metazoa</taxon>
        <taxon>Chordata</taxon>
        <taxon>Craniata</taxon>
        <taxon>Vertebrata</taxon>
        <taxon>Euteleostomi</taxon>
        <taxon>Mammalia</taxon>
        <taxon>Eutheria</taxon>
        <taxon>Euarchontoglires</taxon>
        <taxon>Primates</taxon>
        <taxon>Haplorrhini</taxon>
        <taxon>Catarrhini</taxon>
        <taxon>Hominidae</taxon>
        <taxon>Homo</taxon>
    </lineage>
</organism>
<proteinExistence type="evidence at protein level"/>
<sequence length="83" mass="9462">MGRRKSKRKPPPKKKMTGTLETQFTCPFCNHEKSCDVKMDRARNTGVISCTVCLEEFQTPITYLSEPVDVYSDWIDACEAANQ</sequence>
<comment type="function">
    <text evidence="1 2 3">Factor involved in transcription-coupled nucleotide excision repair (TC-NER), a mechanism that rapidly removes RNA polymerase II-blocking lesions from the transcribed strand of active genes (PubMed:34108662, PubMed:34108663, PubMed:38316879). Acts as a key adapter required to anchor TC-NER factors to RNA polymerase II: stably positions UVSSA and the DCX(ERCC8) complex (also named CSA complex) on arrested RNA polymerase II, leading to neddylation and activation of the DCX(ERCC8) complex and ubiquitination of RNA polymerase II (PubMed:38316879).</text>
</comment>
<comment type="subunit">
    <text evidence="1 2 3">Associates with RNA polymerase II.</text>
</comment>
<comment type="interaction">
    <interactant intactId="EBI-714648">
        <id>P60002</id>
    </interactant>
    <interactant intactId="EBI-746224">
        <id>Q49AR2</id>
        <label>C5orf22</label>
    </interactant>
    <organismsDiffer>false</organismsDiffer>
    <experiments>6</experiments>
</comment>
<comment type="subcellular location">
    <subcellularLocation>
        <location evidence="1">Nucleus</location>
    </subcellularLocation>
    <subcellularLocation>
        <location evidence="1">Chromosome</location>
    </subcellularLocation>
    <text evidence="1">Associates to RNA polymerase II (Pol II).</text>
</comment>
<comment type="similarity">
    <text evidence="5">Belongs to the ELOF1 family.</text>
</comment>
<name>ELOF1_HUMAN</name>
<keyword id="KW-0002">3D-structure</keyword>
<keyword id="KW-0158">Chromosome</keyword>
<keyword id="KW-0227">DNA damage</keyword>
<keyword id="KW-0234">DNA repair</keyword>
<keyword id="KW-0539">Nucleus</keyword>
<keyword id="KW-1267">Proteomics identification</keyword>
<keyword id="KW-1185">Reference proteome</keyword>
<keyword id="KW-0862">Zinc</keyword>
<feature type="chain" id="PRO_0000120941" description="Transcription elongation factor 1 homolog">
    <location>
        <begin position="1"/>
        <end position="83"/>
    </location>
</feature>
<feature type="binding site" evidence="3 7">
    <location>
        <position position="26"/>
    </location>
    <ligand>
        <name>Zn(2+)</name>
        <dbReference type="ChEBI" id="CHEBI:29105"/>
    </ligand>
</feature>
<feature type="binding site" evidence="3 7">
    <location>
        <position position="29"/>
    </location>
    <ligand>
        <name>Zn(2+)</name>
        <dbReference type="ChEBI" id="CHEBI:29105"/>
    </ligand>
</feature>
<feature type="binding site" evidence="3 7">
    <location>
        <position position="50"/>
    </location>
    <ligand>
        <name>Zn(2+)</name>
        <dbReference type="ChEBI" id="CHEBI:29105"/>
    </ligand>
</feature>
<feature type="binding site" evidence="3 7">
    <location>
        <position position="53"/>
    </location>
    <ligand>
        <name>Zn(2+)</name>
        <dbReference type="ChEBI" id="CHEBI:29105"/>
    </ligand>
</feature>
<feature type="mutagenesis site" description="Abolished interaction with the DCX(ERCC8) complex, leading to defects in transcription-coupled nucleotide excision repair (TC-NER)." evidence="3">
    <original>NHE</original>
    <variation>AAA</variation>
    <location>
        <begin position="30"/>
        <end position="32"/>
    </location>
</feature>
<feature type="mutagenesis site" description="Does not affect transcription-coupled nucleotide excision repair (TC-NER); when associated with A-79." evidence="3">
    <original>E</original>
    <variation>A</variation>
    <location>
        <position position="55"/>
    </location>
</feature>
<feature type="mutagenesis site" description="Reduced interaction with RNA polymerase II." evidence="2">
    <original>SD</original>
    <variation>AA</variation>
    <location>
        <begin position="72"/>
        <end position="73"/>
    </location>
</feature>
<feature type="mutagenesis site" description="Does not affect transcription-coupled nucleotide excision repair (TC-NER); when associated with A-55." evidence="3">
    <original>E</original>
    <variation>A</variation>
    <location>
        <position position="79"/>
    </location>
</feature>
<feature type="turn" evidence="8">
    <location>
        <begin position="27"/>
        <end position="29"/>
    </location>
</feature>
<feature type="strand" evidence="8">
    <location>
        <begin position="35"/>
        <end position="40"/>
    </location>
</feature>
<feature type="helix" evidence="8">
    <location>
        <begin position="41"/>
        <end position="43"/>
    </location>
</feature>
<feature type="strand" evidence="8">
    <location>
        <begin position="45"/>
        <end position="53"/>
    </location>
</feature>
<feature type="strand" evidence="8">
    <location>
        <begin position="56"/>
        <end position="60"/>
    </location>
</feature>
<feature type="helix" evidence="8">
    <location>
        <begin position="67"/>
        <end position="81"/>
    </location>
</feature>
<accession>P60002</accession>
<accession>Q8R1J7</accession>
<accession>Q96II4</accession>
<evidence type="ECO:0000269" key="1">
    <source>
    </source>
</evidence>
<evidence type="ECO:0000269" key="2">
    <source>
    </source>
</evidence>
<evidence type="ECO:0000269" key="3">
    <source>
    </source>
</evidence>
<evidence type="ECO:0000303" key="4">
    <source>
    </source>
</evidence>
<evidence type="ECO:0000305" key="5"/>
<evidence type="ECO:0000312" key="6">
    <source>
        <dbReference type="HGNC" id="HGNC:28691"/>
    </source>
</evidence>
<evidence type="ECO:0007744" key="7">
    <source>
        <dbReference type="PDB" id="8B3D"/>
    </source>
</evidence>
<evidence type="ECO:0007829" key="8">
    <source>
        <dbReference type="PDB" id="9FD2"/>
    </source>
</evidence>
<reference key="1">
    <citation type="journal article" date="2004" name="Genome Res.">
        <title>The status, quality, and expansion of the NIH full-length cDNA project: the Mammalian Gene Collection (MGC).</title>
        <authorList>
            <consortium name="The MGC Project Team"/>
        </authorList>
    </citation>
    <scope>NUCLEOTIDE SEQUENCE [LARGE SCALE MRNA]</scope>
    <source>
        <tissue>Muscle</tissue>
    </source>
</reference>
<reference key="2">
    <citation type="journal article" date="2021" name="Nat. Cell Biol.">
        <title>ELOF1 is a transcription-coupled DNA repair factor that directs RNA polymerase II ubiquitylation.</title>
        <authorList>
            <person name="van der Weegen Y."/>
            <person name="de Lint K."/>
            <person name="van den Heuvel D."/>
            <person name="Nakazawa Y."/>
            <person name="Mevissen T.E.T."/>
            <person name="van Schie J.J.M."/>
            <person name="San Martin Alonso M."/>
            <person name="Boer D.E.C."/>
            <person name="Gonzalez-Prieto R."/>
            <person name="Narayanan I.V."/>
            <person name="Klaassen N.H.M."/>
            <person name="Wondergem A.P."/>
            <person name="Roohollahi K."/>
            <person name="Dorsman J.C."/>
            <person name="Hara Y."/>
            <person name="Vertegaal A.C.O."/>
            <person name="de Lange J."/>
            <person name="Walter J.C."/>
            <person name="Noordermeer S.M."/>
            <person name="Ljungman M."/>
            <person name="Ogi T."/>
            <person name="Wolthuis R.M.F."/>
            <person name="Luijsterburg M.S."/>
        </authorList>
    </citation>
    <scope>FUNCTION</scope>
    <scope>INTERACTION WITH RNA POLYMERASE II</scope>
    <scope>MUTAGENESIS OF 72-SER-ASP-73</scope>
</reference>
<reference key="3">
    <citation type="journal article" date="2021" name="Nat. Cell Biol.">
        <title>Elongation factor ELOF1 drives transcription-coupled repair and prevents genome instability.</title>
        <authorList>
            <person name="Geijer M.E."/>
            <person name="Zhou D."/>
            <person name="Selvam K."/>
            <person name="Steurer B."/>
            <person name="Mukherjee C."/>
            <person name="Evers B."/>
            <person name="Cugusi S."/>
            <person name="van Toorn M."/>
            <person name="van der Woude M."/>
            <person name="Janssens R.C."/>
            <person name="Kok Y.P."/>
            <person name="Gong W."/>
            <person name="Raams A."/>
            <person name="Lo C.S.Y."/>
            <person name="Lebbink J.H.G."/>
            <person name="Geverts B."/>
            <person name="Plummer D.A."/>
            <person name="Bezstarosti K."/>
            <person name="Theil A.F."/>
            <person name="Mitter R."/>
            <person name="Houtsmuller A.B."/>
            <person name="Vermeulen W."/>
            <person name="Demmers J.A.A."/>
            <person name="Li S."/>
            <person name="van Vugt M.A.T.M."/>
            <person name="Lans H."/>
            <person name="Bernards R."/>
            <person name="Svejstrup J.Q."/>
            <person name="Ray Chaudhuri A."/>
            <person name="Wyrick J.J."/>
            <person name="Marteijn J.A."/>
        </authorList>
    </citation>
    <scope>FUNCTION</scope>
    <scope>INTERACTION WITH RNA POLYMERASE II</scope>
    <scope>SUBCELLULAR LOCATION</scope>
</reference>
<reference evidence="7" key="4">
    <citation type="journal article" date="2024" name="Nat. Struct. Mol. Biol.">
        <title>Structural basis for RNA polymerase II ubiquitylation and inactivation in transcription-coupled repair.</title>
        <authorList>
            <person name="Kokic G."/>
            <person name="Yakoub G."/>
            <person name="van den Heuvel D."/>
            <person name="Wondergem A.P."/>
            <person name="van der Meer P.J."/>
            <person name="van der Weegen Y."/>
            <person name="Chernev A."/>
            <person name="Fianu I."/>
            <person name="Fokkens T.J."/>
            <person name="Lorenz S."/>
            <person name="Urlaub H."/>
            <person name="Cramer P."/>
            <person name="Luijsterburg M.S."/>
        </authorList>
    </citation>
    <scope>STRUCTURE BY ELECTRON MICROSCOPY (2.60 ANGSTROMS) IN COMPLEX WITH ZINC; UVSSA; ERCC6; ERCC8; DDB1 AND RNA POLYMERASE II</scope>
    <scope>FUNCTION</scope>
    <scope>INTERACTION WITH RNA POLYMERASE II</scope>
    <scope>ZINC-BINDING</scope>
    <scope>MUTAGENESIS OF 30-ASN--GLU-32; GLU-55 AND GLU-79</scope>
</reference>